<reference key="1">
    <citation type="journal article" date="2001" name="Microb. Drug Resist.">
        <title>Annotated draft genomic sequence from a Streptococcus pneumoniae type 19F clinical isolate.</title>
        <authorList>
            <person name="Dopazo J."/>
            <person name="Mendoza A."/>
            <person name="Herrero J."/>
            <person name="Caldara F."/>
            <person name="Humbert Y."/>
            <person name="Friedli L."/>
            <person name="Guerrier M."/>
            <person name="Grand-Schenk E."/>
            <person name="Gandin C."/>
            <person name="de Francesco M."/>
            <person name="Polissi A."/>
            <person name="Buell G."/>
            <person name="Feger G."/>
            <person name="Garcia E."/>
            <person name="Peitsch M."/>
            <person name="Garcia-Bustos J.F."/>
        </authorList>
    </citation>
    <scope>NUCLEOTIDE SEQUENCE [LARGE SCALE GENOMIC DNA]</scope>
    <source>
        <strain>G54</strain>
    </source>
</reference>
<reference key="2">
    <citation type="submission" date="2008-03" db="EMBL/GenBank/DDBJ databases">
        <title>Pneumococcal beta glucoside metabolism investigated by whole genome comparison.</title>
        <authorList>
            <person name="Mulas L."/>
            <person name="Trappetti C."/>
            <person name="Hakenbeck R."/>
            <person name="Iannelli F."/>
            <person name="Pozzi G."/>
            <person name="Davidsen T.M."/>
            <person name="Tettelin H."/>
            <person name="Oggioni M."/>
        </authorList>
    </citation>
    <scope>NUCLEOTIDE SEQUENCE [LARGE SCALE GENOMIC DNA]</scope>
    <source>
        <strain>G54</strain>
    </source>
</reference>
<proteinExistence type="inferred from homology"/>
<organism>
    <name type="scientific">Streptococcus pneumoniae serotype 19F (strain G54)</name>
    <dbReference type="NCBI Taxonomy" id="512566"/>
    <lineage>
        <taxon>Bacteria</taxon>
        <taxon>Bacillati</taxon>
        <taxon>Bacillota</taxon>
        <taxon>Bacilli</taxon>
        <taxon>Lactobacillales</taxon>
        <taxon>Streptococcaceae</taxon>
        <taxon>Streptococcus</taxon>
    </lineage>
</organism>
<keyword id="KW-0012">Acyltransferase</keyword>
<keyword id="KW-0133">Cell shape</keyword>
<keyword id="KW-0961">Cell wall biogenesis/degradation</keyword>
<keyword id="KW-0963">Cytoplasm</keyword>
<keyword id="KW-0460">Magnesium</keyword>
<keyword id="KW-0479">Metal-binding</keyword>
<keyword id="KW-0511">Multifunctional enzyme</keyword>
<keyword id="KW-0548">Nucleotidyltransferase</keyword>
<keyword id="KW-0573">Peptidoglycan synthesis</keyword>
<keyword id="KW-0677">Repeat</keyword>
<keyword id="KW-0808">Transferase</keyword>
<gene>
    <name evidence="1" type="primary">glmU</name>
    <name type="ordered locus">SPG_0913</name>
</gene>
<sequence>MSNFAIXLAAGKGTRMKSDLPKVLHKVAGIPMLEYVXRSVGAIXPXKTVTVVGHKAELVEEVLTGQTEFVTQSEQLGTGHAVMMTEPILEGLSGHTLVIAGDTPLITGESLKNLIDFHINHKNVATILTAETDNPFGYGRIVRNDNAEXLRIVEQKDATDFEKQIKEINTGTYVFDNERLFEALKNINTNNAQGEYYITDVIGIFRETGEKVGAYTLKDFDESLGVNDRVALATAESVMRRRINHKHMVNGVSFVNPEATYIDIDVEIAPEVQIEANVTLKGQTKIGAETVLTNGTYVVDSTIGAGAVITNSMIEESSVADGVTVGPYAHIRPNSSLGAQVHIGNFVEVKGSSIGENTKAGHLTYIGNCEVGSNVNFGAGTITVNYDGKNKYKTVIGDNVFVGSNSTIIAPVXLGDNSLVGAGSTITKDVPADAIAIGRGRQINKDEYATRLPHHPKNQ</sequence>
<dbReference type="EC" id="2.7.7.23" evidence="1"/>
<dbReference type="EC" id="2.3.1.157" evidence="1"/>
<dbReference type="EMBL" id="CP001015">
    <property type="protein sequence ID" value="ACF56719.1"/>
    <property type="molecule type" value="Genomic_DNA"/>
</dbReference>
<dbReference type="KEGG" id="spx:SPG_0913"/>
<dbReference type="HOGENOM" id="CLU_029499_15_2_9"/>
<dbReference type="UniPathway" id="UPA00113">
    <property type="reaction ID" value="UER00532"/>
</dbReference>
<dbReference type="UniPathway" id="UPA00113">
    <property type="reaction ID" value="UER00533"/>
</dbReference>
<dbReference type="UniPathway" id="UPA00973"/>
<dbReference type="GO" id="GO:0005737">
    <property type="term" value="C:cytoplasm"/>
    <property type="evidence" value="ECO:0007669"/>
    <property type="project" value="UniProtKB-SubCell"/>
</dbReference>
<dbReference type="GO" id="GO:0016020">
    <property type="term" value="C:membrane"/>
    <property type="evidence" value="ECO:0007669"/>
    <property type="project" value="GOC"/>
</dbReference>
<dbReference type="GO" id="GO:0019134">
    <property type="term" value="F:glucosamine-1-phosphate N-acetyltransferase activity"/>
    <property type="evidence" value="ECO:0007669"/>
    <property type="project" value="UniProtKB-UniRule"/>
</dbReference>
<dbReference type="GO" id="GO:0000287">
    <property type="term" value="F:magnesium ion binding"/>
    <property type="evidence" value="ECO:0007669"/>
    <property type="project" value="UniProtKB-UniRule"/>
</dbReference>
<dbReference type="GO" id="GO:0003977">
    <property type="term" value="F:UDP-N-acetylglucosamine diphosphorylase activity"/>
    <property type="evidence" value="ECO:0007669"/>
    <property type="project" value="UniProtKB-UniRule"/>
</dbReference>
<dbReference type="GO" id="GO:0000902">
    <property type="term" value="P:cell morphogenesis"/>
    <property type="evidence" value="ECO:0007669"/>
    <property type="project" value="UniProtKB-UniRule"/>
</dbReference>
<dbReference type="GO" id="GO:0071555">
    <property type="term" value="P:cell wall organization"/>
    <property type="evidence" value="ECO:0007669"/>
    <property type="project" value="UniProtKB-KW"/>
</dbReference>
<dbReference type="GO" id="GO:0009245">
    <property type="term" value="P:lipid A biosynthetic process"/>
    <property type="evidence" value="ECO:0007669"/>
    <property type="project" value="UniProtKB-UniRule"/>
</dbReference>
<dbReference type="GO" id="GO:0009252">
    <property type="term" value="P:peptidoglycan biosynthetic process"/>
    <property type="evidence" value="ECO:0007669"/>
    <property type="project" value="UniProtKB-UniRule"/>
</dbReference>
<dbReference type="GO" id="GO:0008360">
    <property type="term" value="P:regulation of cell shape"/>
    <property type="evidence" value="ECO:0007669"/>
    <property type="project" value="UniProtKB-KW"/>
</dbReference>
<dbReference type="GO" id="GO:0006048">
    <property type="term" value="P:UDP-N-acetylglucosamine biosynthetic process"/>
    <property type="evidence" value="ECO:0007669"/>
    <property type="project" value="UniProtKB-UniPathway"/>
</dbReference>
<dbReference type="CDD" id="cd02540">
    <property type="entry name" value="GT2_GlmU_N_bac"/>
    <property type="match status" value="1"/>
</dbReference>
<dbReference type="CDD" id="cd03353">
    <property type="entry name" value="LbH_GlmU_C"/>
    <property type="match status" value="1"/>
</dbReference>
<dbReference type="Gene3D" id="2.160.10.10">
    <property type="entry name" value="Hexapeptide repeat proteins"/>
    <property type="match status" value="1"/>
</dbReference>
<dbReference type="Gene3D" id="3.90.550.10">
    <property type="entry name" value="Spore Coat Polysaccharide Biosynthesis Protein SpsA, Chain A"/>
    <property type="match status" value="1"/>
</dbReference>
<dbReference type="HAMAP" id="MF_01631">
    <property type="entry name" value="GlmU"/>
    <property type="match status" value="1"/>
</dbReference>
<dbReference type="InterPro" id="IPR005882">
    <property type="entry name" value="Bifunctional_GlmU"/>
</dbReference>
<dbReference type="InterPro" id="IPR050065">
    <property type="entry name" value="GlmU-like"/>
</dbReference>
<dbReference type="InterPro" id="IPR038009">
    <property type="entry name" value="GlmU_C_LbH"/>
</dbReference>
<dbReference type="InterPro" id="IPR001451">
    <property type="entry name" value="Hexapep"/>
</dbReference>
<dbReference type="InterPro" id="IPR018357">
    <property type="entry name" value="Hexapep_transf_CS"/>
</dbReference>
<dbReference type="InterPro" id="IPR005835">
    <property type="entry name" value="NTP_transferase_dom"/>
</dbReference>
<dbReference type="InterPro" id="IPR029044">
    <property type="entry name" value="Nucleotide-diphossugar_trans"/>
</dbReference>
<dbReference type="InterPro" id="IPR011004">
    <property type="entry name" value="Trimer_LpxA-like_sf"/>
</dbReference>
<dbReference type="NCBIfam" id="TIGR01173">
    <property type="entry name" value="glmU"/>
    <property type="match status" value="1"/>
</dbReference>
<dbReference type="NCBIfam" id="NF010934">
    <property type="entry name" value="PRK14354.1"/>
    <property type="match status" value="1"/>
</dbReference>
<dbReference type="PANTHER" id="PTHR43584:SF3">
    <property type="entry name" value="BIFUNCTIONAL PROTEIN GLMU"/>
    <property type="match status" value="1"/>
</dbReference>
<dbReference type="PANTHER" id="PTHR43584">
    <property type="entry name" value="NUCLEOTIDYL TRANSFERASE"/>
    <property type="match status" value="1"/>
</dbReference>
<dbReference type="Pfam" id="PF14602">
    <property type="entry name" value="Hexapep_2"/>
    <property type="match status" value="1"/>
</dbReference>
<dbReference type="Pfam" id="PF00483">
    <property type="entry name" value="NTP_transferase"/>
    <property type="match status" value="1"/>
</dbReference>
<dbReference type="SUPFAM" id="SSF53448">
    <property type="entry name" value="Nucleotide-diphospho-sugar transferases"/>
    <property type="match status" value="1"/>
</dbReference>
<dbReference type="SUPFAM" id="SSF51161">
    <property type="entry name" value="Trimeric LpxA-like enzymes"/>
    <property type="match status" value="1"/>
</dbReference>
<dbReference type="PROSITE" id="PS00101">
    <property type="entry name" value="HEXAPEP_TRANSFERASES"/>
    <property type="match status" value="1"/>
</dbReference>
<evidence type="ECO:0000255" key="1">
    <source>
        <dbReference type="HAMAP-Rule" id="MF_01631"/>
    </source>
</evidence>
<feature type="chain" id="PRO_1000186496" description="Bifunctional protein GlmU">
    <location>
        <begin position="1"/>
        <end position="459"/>
    </location>
</feature>
<feature type="region of interest" description="Pyrophosphorylase" evidence="1">
    <location>
        <begin position="1"/>
        <end position="229"/>
    </location>
</feature>
<feature type="region of interest" description="Linker" evidence="1">
    <location>
        <begin position="230"/>
        <end position="250"/>
    </location>
</feature>
<feature type="region of interest" description="N-acetyltransferase" evidence="1">
    <location>
        <begin position="251"/>
        <end position="459"/>
    </location>
</feature>
<feature type="active site" description="Proton acceptor" evidence="1">
    <location>
        <position position="362"/>
    </location>
</feature>
<feature type="binding site" evidence="1">
    <location>
        <begin position="8"/>
        <end position="11"/>
    </location>
    <ligand>
        <name>UDP-N-acetyl-alpha-D-glucosamine</name>
        <dbReference type="ChEBI" id="CHEBI:57705"/>
    </ligand>
</feature>
<feature type="binding site" evidence="1">
    <location>
        <position position="22"/>
    </location>
    <ligand>
        <name>UDP-N-acetyl-alpha-D-glucosamine</name>
        <dbReference type="ChEBI" id="CHEBI:57705"/>
    </ligand>
</feature>
<feature type="binding site" evidence="1">
    <location>
        <position position="72"/>
    </location>
    <ligand>
        <name>UDP-N-acetyl-alpha-D-glucosamine</name>
        <dbReference type="ChEBI" id="CHEBI:57705"/>
    </ligand>
</feature>
<feature type="binding site" evidence="1">
    <location>
        <begin position="77"/>
        <end position="78"/>
    </location>
    <ligand>
        <name>UDP-N-acetyl-alpha-D-glucosamine</name>
        <dbReference type="ChEBI" id="CHEBI:57705"/>
    </ligand>
</feature>
<feature type="binding site" evidence="1">
    <location>
        <position position="102"/>
    </location>
    <ligand>
        <name>Mg(2+)</name>
        <dbReference type="ChEBI" id="CHEBI:18420"/>
    </ligand>
</feature>
<feature type="binding site" evidence="1">
    <location>
        <position position="139"/>
    </location>
    <ligand>
        <name>UDP-N-acetyl-alpha-D-glucosamine</name>
        <dbReference type="ChEBI" id="CHEBI:57705"/>
    </ligand>
</feature>
<feature type="binding site" evidence="1">
    <location>
        <position position="154"/>
    </location>
    <ligand>
        <name>UDP-N-acetyl-alpha-D-glucosamine</name>
        <dbReference type="ChEBI" id="CHEBI:57705"/>
    </ligand>
</feature>
<feature type="binding site" evidence="1">
    <location>
        <position position="169"/>
    </location>
    <ligand>
        <name>UDP-N-acetyl-alpha-D-glucosamine</name>
        <dbReference type="ChEBI" id="CHEBI:57705"/>
    </ligand>
</feature>
<feature type="binding site" evidence="1">
    <location>
        <position position="227"/>
    </location>
    <ligand>
        <name>Mg(2+)</name>
        <dbReference type="ChEBI" id="CHEBI:18420"/>
    </ligand>
</feature>
<feature type="binding site" evidence="1">
    <location>
        <position position="227"/>
    </location>
    <ligand>
        <name>UDP-N-acetyl-alpha-D-glucosamine</name>
        <dbReference type="ChEBI" id="CHEBI:57705"/>
    </ligand>
</feature>
<feature type="binding site" evidence="1">
    <location>
        <position position="332"/>
    </location>
    <ligand>
        <name>UDP-N-acetyl-alpha-D-glucosamine</name>
        <dbReference type="ChEBI" id="CHEBI:57705"/>
    </ligand>
</feature>
<feature type="binding site" evidence="1">
    <location>
        <position position="350"/>
    </location>
    <ligand>
        <name>UDP-N-acetyl-alpha-D-glucosamine</name>
        <dbReference type="ChEBI" id="CHEBI:57705"/>
    </ligand>
</feature>
<feature type="binding site" evidence="1">
    <location>
        <position position="365"/>
    </location>
    <ligand>
        <name>UDP-N-acetyl-alpha-D-glucosamine</name>
        <dbReference type="ChEBI" id="CHEBI:57705"/>
    </ligand>
</feature>
<feature type="binding site" evidence="1">
    <location>
        <position position="376"/>
    </location>
    <ligand>
        <name>UDP-N-acetyl-alpha-D-glucosamine</name>
        <dbReference type="ChEBI" id="CHEBI:57705"/>
    </ligand>
</feature>
<feature type="binding site" evidence="1">
    <location>
        <position position="379"/>
    </location>
    <ligand>
        <name>acetyl-CoA</name>
        <dbReference type="ChEBI" id="CHEBI:57288"/>
    </ligand>
</feature>
<feature type="binding site" evidence="1">
    <location>
        <begin position="385"/>
        <end position="386"/>
    </location>
    <ligand>
        <name>acetyl-CoA</name>
        <dbReference type="ChEBI" id="CHEBI:57288"/>
    </ligand>
</feature>
<feature type="binding site" evidence="1">
    <location>
        <position position="404"/>
    </location>
    <ligand>
        <name>acetyl-CoA</name>
        <dbReference type="ChEBI" id="CHEBI:57288"/>
    </ligand>
</feature>
<feature type="binding site" evidence="1">
    <location>
        <position position="422"/>
    </location>
    <ligand>
        <name>acetyl-CoA</name>
        <dbReference type="ChEBI" id="CHEBI:57288"/>
    </ligand>
</feature>
<feature type="binding site" evidence="1">
    <location>
        <position position="439"/>
    </location>
    <ligand>
        <name>acetyl-CoA</name>
        <dbReference type="ChEBI" id="CHEBI:57288"/>
    </ligand>
</feature>
<name>GLMU_STRP4</name>
<comment type="function">
    <text evidence="1">Catalyzes the last two sequential reactions in the de novo biosynthetic pathway for UDP-N-acetylglucosamine (UDP-GlcNAc). The C-terminal domain catalyzes the transfer of acetyl group from acetyl coenzyme A to glucosamine-1-phosphate (GlcN-1-P) to produce N-acetylglucosamine-1-phosphate (GlcNAc-1-P), which is converted into UDP-GlcNAc by the transfer of uridine 5-monophosphate (from uridine 5-triphosphate), a reaction catalyzed by the N-terminal domain.</text>
</comment>
<comment type="catalytic activity">
    <reaction evidence="1">
        <text>alpha-D-glucosamine 1-phosphate + acetyl-CoA = N-acetyl-alpha-D-glucosamine 1-phosphate + CoA + H(+)</text>
        <dbReference type="Rhea" id="RHEA:13725"/>
        <dbReference type="ChEBI" id="CHEBI:15378"/>
        <dbReference type="ChEBI" id="CHEBI:57287"/>
        <dbReference type="ChEBI" id="CHEBI:57288"/>
        <dbReference type="ChEBI" id="CHEBI:57776"/>
        <dbReference type="ChEBI" id="CHEBI:58516"/>
        <dbReference type="EC" id="2.3.1.157"/>
    </reaction>
</comment>
<comment type="catalytic activity">
    <reaction evidence="1">
        <text>N-acetyl-alpha-D-glucosamine 1-phosphate + UTP + H(+) = UDP-N-acetyl-alpha-D-glucosamine + diphosphate</text>
        <dbReference type="Rhea" id="RHEA:13509"/>
        <dbReference type="ChEBI" id="CHEBI:15378"/>
        <dbReference type="ChEBI" id="CHEBI:33019"/>
        <dbReference type="ChEBI" id="CHEBI:46398"/>
        <dbReference type="ChEBI" id="CHEBI:57705"/>
        <dbReference type="ChEBI" id="CHEBI:57776"/>
        <dbReference type="EC" id="2.7.7.23"/>
    </reaction>
</comment>
<comment type="cofactor">
    <cofactor evidence="1">
        <name>Mg(2+)</name>
        <dbReference type="ChEBI" id="CHEBI:18420"/>
    </cofactor>
    <text evidence="1">Binds 1 Mg(2+) ion per subunit.</text>
</comment>
<comment type="pathway">
    <text evidence="1">Nucleotide-sugar biosynthesis; UDP-N-acetyl-alpha-D-glucosamine biosynthesis; N-acetyl-alpha-D-glucosamine 1-phosphate from alpha-D-glucosamine 6-phosphate (route II): step 2/2.</text>
</comment>
<comment type="pathway">
    <text evidence="1">Nucleotide-sugar biosynthesis; UDP-N-acetyl-alpha-D-glucosamine biosynthesis; UDP-N-acetyl-alpha-D-glucosamine from N-acetyl-alpha-D-glucosamine 1-phosphate: step 1/1.</text>
</comment>
<comment type="pathway">
    <text evidence="1">Bacterial outer membrane biogenesis; LPS lipid A biosynthesis.</text>
</comment>
<comment type="subunit">
    <text evidence="1">Homotrimer.</text>
</comment>
<comment type="subcellular location">
    <subcellularLocation>
        <location evidence="1">Cytoplasm</location>
    </subcellularLocation>
</comment>
<comment type="similarity">
    <text evidence="1">In the N-terminal section; belongs to the N-acetylglucosamine-1-phosphate uridyltransferase family.</text>
</comment>
<comment type="similarity">
    <text evidence="1">In the C-terminal section; belongs to the transferase hexapeptide repeat family.</text>
</comment>
<accession>B5E4A8</accession>
<protein>
    <recommendedName>
        <fullName evidence="1">Bifunctional protein GlmU</fullName>
    </recommendedName>
    <domain>
        <recommendedName>
            <fullName evidence="1">UDP-N-acetylglucosamine pyrophosphorylase</fullName>
            <ecNumber evidence="1">2.7.7.23</ecNumber>
        </recommendedName>
        <alternativeName>
            <fullName evidence="1">N-acetylglucosamine-1-phosphate uridyltransferase</fullName>
        </alternativeName>
    </domain>
    <domain>
        <recommendedName>
            <fullName evidence="1">Glucosamine-1-phosphate N-acetyltransferase</fullName>
            <ecNumber evidence="1">2.3.1.157</ecNumber>
        </recommendedName>
    </domain>
</protein>